<organismHost>
    <name type="scientific">Homo sapiens</name>
    <name type="common">Human</name>
    <dbReference type="NCBI Taxonomy" id="9606"/>
</organismHost>
<name>BHLF1_EBVB9</name>
<organism>
    <name type="scientific">Epstein-Barr virus (strain B95-8)</name>
    <name type="common">HHV-4</name>
    <name type="synonym">Human herpesvirus 4</name>
    <dbReference type="NCBI Taxonomy" id="10377"/>
    <lineage>
        <taxon>Viruses</taxon>
        <taxon>Duplodnaviria</taxon>
        <taxon>Heunggongvirae</taxon>
        <taxon>Peploviricota</taxon>
        <taxon>Herviviricetes</taxon>
        <taxon>Herpesvirales</taxon>
        <taxon>Orthoherpesviridae</taxon>
        <taxon>Gammaherpesvirinae</taxon>
        <taxon>Lymphocryptovirus</taxon>
        <taxon>Lymphocryptovirus humangamma4</taxon>
        <taxon>Epstein-Barr virus (strain GD1)</taxon>
    </lineage>
</organism>
<evidence type="ECO:0000256" key="1">
    <source>
        <dbReference type="SAM" id="MobiDB-lite"/>
    </source>
</evidence>
<proteinExistence type="predicted"/>
<feature type="chain" id="PRO_0000116273" description="Uncharacterized protein BHLF1">
    <location>
        <begin position="1"/>
        <end position="660"/>
    </location>
</feature>
<feature type="repeat" description="1">
    <location>
        <begin position="149"/>
        <end position="273"/>
    </location>
</feature>
<feature type="repeat" description="2">
    <location>
        <begin position="274"/>
        <end position="398"/>
    </location>
</feature>
<feature type="repeat" description="3">
    <location>
        <begin position="399"/>
        <end position="523"/>
    </location>
</feature>
<feature type="repeat" description="4">
    <location>
        <begin position="524"/>
        <end position="648"/>
    </location>
</feature>
<feature type="region of interest" description="Disordered" evidence="1">
    <location>
        <begin position="1"/>
        <end position="660"/>
    </location>
</feature>
<feature type="region of interest" description="4 X 125 AA tandem repeats">
    <location>
        <begin position="149"/>
        <end position="648"/>
    </location>
</feature>
<feature type="compositionally biased region" description="Gly residues" evidence="1">
    <location>
        <begin position="67"/>
        <end position="80"/>
    </location>
</feature>
<feature type="compositionally biased region" description="Polar residues" evidence="1">
    <location>
        <begin position="104"/>
        <end position="116"/>
    </location>
</feature>
<feature type="compositionally biased region" description="Low complexity" evidence="1">
    <location>
        <begin position="177"/>
        <end position="196"/>
    </location>
</feature>
<feature type="compositionally biased region" description="Low complexity" evidence="1">
    <location>
        <begin position="302"/>
        <end position="321"/>
    </location>
</feature>
<feature type="compositionally biased region" description="Low complexity" evidence="1">
    <location>
        <begin position="427"/>
        <end position="446"/>
    </location>
</feature>
<feature type="compositionally biased region" description="Low complexity" evidence="1">
    <location>
        <begin position="552"/>
        <end position="571"/>
    </location>
</feature>
<dbReference type="EMBL" id="V01555">
    <property type="status" value="NOT_ANNOTATED_CDS"/>
    <property type="molecule type" value="Genomic_DNA"/>
</dbReference>
<dbReference type="EMBL" id="AJ507799">
    <property type="protein sequence ID" value="CAD53473.1"/>
    <property type="molecule type" value="Genomic_DNA"/>
</dbReference>
<dbReference type="PIR" id="A03742">
    <property type="entry name" value="QQBE3"/>
</dbReference>
<dbReference type="RefSeq" id="YP_401645.1">
    <property type="nucleotide sequence ID" value="NC_007605.1"/>
</dbReference>
<dbReference type="DNASU" id="3783705"/>
<dbReference type="GeneID" id="3783705"/>
<dbReference type="KEGG" id="vg:3783705"/>
<dbReference type="Proteomes" id="UP000153037">
    <property type="component" value="Segment"/>
</dbReference>
<accession>P03181</accession>
<accession>Q777A3</accession>
<gene>
    <name type="ORF">BHLF1</name>
</gene>
<sequence length="660" mass="66245">MGTPCQSARGPRTTPLPHCPPPCLPGAPDQQTRRLPPGWGQRTAPTQVGLADAASPDELQDQASGARPGGGNRVGAGRGRPGTPAPSRQSRRTGPAEQADHAHSNPTGGCSDPQRSPRTRQAGYALGEGSAGLGSRGPRPHPAFQVQWSARNPGCPRTWRRRSGAQRGHPPPGAGQRPSGPTGGRPAAPGAPGTPAAPGPGGGAAVPSGATPHPERGSGPADPPAAARLPPERQEPRLPQDLAAAQRCPAGPPPTRSGAAAQRTHRRPPGCPRSARNPGCPRTWRRRSGAQRGHPPPGAGQRPSGPTGGRPAAPGAPGTPAAPGPGGGAAVPSGATPHPERGSGPADPPAAARLPPERQEPRLPQDLAAAQRCPAGPPPTRSGAAAQRTHRRPPGCPRSARNPGCPRTWRRRSGAQRGHPPPGAGQRPSGPTGGRPAAPGAPGTPAAPGPGGGAAVPSGATPHPERGSGPADPPAAARLPPERQEPRLPQDLAAAQRCPAGPPPTRSGAAAQRTHRRPPGCPRSARNPGCPRTWRRRSGAQRGHPPPGAGQRPSGPTGGRPAAPGAPGTPAAPGPGGGAAVPSGATPHPERGSGPADPPAAARLPPERQEPRLPQDLAAAQRCPAGPPPTRSGAAAQRTHRRPPGCPRSARNPGCPRTWR</sequence>
<reference key="1">
    <citation type="journal article" date="1984" name="Nature">
        <title>DNA sequence and expression of the B95-8 Epstein-Barr virus genome.</title>
        <authorList>
            <person name="Baer R."/>
            <person name="Bankier A.T."/>
            <person name="Biggin M.D."/>
            <person name="Deininger P.L."/>
            <person name="Farrell P.J."/>
            <person name="Gibson T.J."/>
            <person name="Hatfull G."/>
            <person name="Hudson G.S."/>
            <person name="Satchwell S.C."/>
            <person name="Seguin C."/>
            <person name="Tuffnell P.S."/>
            <person name="Barrell B.G."/>
        </authorList>
    </citation>
    <scope>NUCLEOTIDE SEQUENCE [LARGE SCALE GENOMIC DNA]</scope>
</reference>
<reference key="2">
    <citation type="journal article" date="2003" name="Virology">
        <title>Updated Epstein-Barr virus (EBV) DNA sequence and analysis of a promoter for the BART (CST, BARF0) RNAs of EBV.</title>
        <authorList>
            <person name="de Jesus O."/>
            <person name="Smith P.R."/>
            <person name="Spender L.C."/>
            <person name="Elgueta Karstegl C."/>
            <person name="Niller H.H."/>
            <person name="Huang D."/>
            <person name="Farrell P.J."/>
        </authorList>
    </citation>
    <scope>GENOME REANNOTATION</scope>
</reference>
<protein>
    <recommendedName>
        <fullName>Uncharacterized protein BHLF1</fullName>
    </recommendedName>
</protein>
<keyword id="KW-0244">Early protein</keyword>
<keyword id="KW-1185">Reference proteome</keyword>
<keyword id="KW-0677">Repeat</keyword>